<proteinExistence type="inferred from homology"/>
<keyword id="KW-0378">Hydrolase</keyword>
<keyword id="KW-0540">Nuclease</keyword>
<keyword id="KW-0547">Nucleotide-binding</keyword>
<keyword id="KW-0597">Phosphoprotein</keyword>
<keyword id="KW-1185">Reference proteome</keyword>
<keyword id="KW-1277">Toxin-antitoxin system</keyword>
<sequence>MPKRDIKAFLYDILEYMDDIINFTKNMEYEEFINNKAIKYAVVRCLEVIGEAVKKIPKDIREKYPHIPFKELAGMRDKLIHQYFGVDYLTVWETAKYEIPEIKKEFEKIIKDIEGKDENSL</sequence>
<protein>
    <recommendedName>
        <fullName>Putative RNase MJ1216</fullName>
        <ecNumber evidence="2">3.1.-.-</ecNumber>
    </recommendedName>
    <alternativeName>
        <fullName>Putative toxin MJ1216</fullName>
    </alternativeName>
</protein>
<organism>
    <name type="scientific">Methanocaldococcus jannaschii (strain ATCC 43067 / DSM 2661 / JAL-1 / JCM 10045 / NBRC 100440)</name>
    <name type="common">Methanococcus jannaschii</name>
    <dbReference type="NCBI Taxonomy" id="243232"/>
    <lineage>
        <taxon>Archaea</taxon>
        <taxon>Methanobacteriati</taxon>
        <taxon>Methanobacteriota</taxon>
        <taxon>Methanomada group</taxon>
        <taxon>Methanococci</taxon>
        <taxon>Methanococcales</taxon>
        <taxon>Methanocaldococcaceae</taxon>
        <taxon>Methanocaldococcus</taxon>
    </lineage>
</organism>
<dbReference type="EC" id="3.1.-.-" evidence="2"/>
<dbReference type="EMBL" id="L77117">
    <property type="protein sequence ID" value="AAB99217.1"/>
    <property type="molecule type" value="Genomic_DNA"/>
</dbReference>
<dbReference type="PIR" id="G64451">
    <property type="entry name" value="G64451"/>
</dbReference>
<dbReference type="RefSeq" id="WP_010870728.1">
    <property type="nucleotide sequence ID" value="NC_000909.1"/>
</dbReference>
<dbReference type="SMR" id="Q58613"/>
<dbReference type="FunCoup" id="Q58613">
    <property type="interactions" value="3"/>
</dbReference>
<dbReference type="STRING" id="243232.MJ_1216"/>
<dbReference type="PaxDb" id="243232-MJ_1216"/>
<dbReference type="EnsemblBacteria" id="AAB99217">
    <property type="protein sequence ID" value="AAB99217"/>
    <property type="gene ID" value="MJ_1216"/>
</dbReference>
<dbReference type="GeneID" id="1452112"/>
<dbReference type="KEGG" id="mja:MJ_1216"/>
<dbReference type="eggNOG" id="arCOG05024">
    <property type="taxonomic scope" value="Archaea"/>
</dbReference>
<dbReference type="HOGENOM" id="CLU_142825_3_3_2"/>
<dbReference type="InParanoid" id="Q58613"/>
<dbReference type="OrthoDB" id="318716at2157"/>
<dbReference type="PhylomeDB" id="Q58613"/>
<dbReference type="Proteomes" id="UP000000805">
    <property type="component" value="Chromosome"/>
</dbReference>
<dbReference type="GO" id="GO:0110001">
    <property type="term" value="C:toxin-antitoxin complex"/>
    <property type="evidence" value="ECO:0007669"/>
    <property type="project" value="InterPro"/>
</dbReference>
<dbReference type="GO" id="GO:0000166">
    <property type="term" value="F:nucleotide binding"/>
    <property type="evidence" value="ECO:0007669"/>
    <property type="project" value="UniProtKB-KW"/>
</dbReference>
<dbReference type="GO" id="GO:0004540">
    <property type="term" value="F:RNA nuclease activity"/>
    <property type="evidence" value="ECO:0007669"/>
    <property type="project" value="InterPro"/>
</dbReference>
<dbReference type="InterPro" id="IPR008201">
    <property type="entry name" value="HepT-like"/>
</dbReference>
<dbReference type="InterPro" id="IPR051813">
    <property type="entry name" value="HepT_RNase_toxin"/>
</dbReference>
<dbReference type="PANTHER" id="PTHR34139:SF1">
    <property type="entry name" value="RNASE MJ1380-RELATED"/>
    <property type="match status" value="1"/>
</dbReference>
<dbReference type="PANTHER" id="PTHR34139">
    <property type="entry name" value="UPF0331 PROTEIN MJ0127"/>
    <property type="match status" value="1"/>
</dbReference>
<dbReference type="Pfam" id="PF01934">
    <property type="entry name" value="HepT-like"/>
    <property type="match status" value="1"/>
</dbReference>
<comment type="function">
    <text evidence="2">Probable toxic component of a putative type VII toxin-antitoxin (TA) system, probably an RNase. Probably neutralized by antitoxin MJ1215 or MJ1217. Neutralization may be due to AMPylation by antitoxin.</text>
</comment>
<comment type="subunit">
    <text evidence="2">Homodimer, probably forms a complex with antitoxin MJ1215 or MJ1217.</text>
</comment>
<comment type="PTM">
    <text evidence="1">Modified by antitoxin MJ1215 or MJ1217; probably at least 2 successive AMPylation events occur on Tyr-83.</text>
</comment>
<comment type="similarity">
    <text evidence="3">Belongs to the HepT RNase toxin family.</text>
</comment>
<name>Y1216_METJA</name>
<feature type="chain" id="PRO_0000158263" description="Putative RNase MJ1216">
    <location>
        <begin position="1"/>
        <end position="121"/>
    </location>
</feature>
<feature type="short sequence motif" description="RX(4)HXY motif" evidence="1">
    <location>
        <begin position="76"/>
        <end position="83"/>
    </location>
</feature>
<feature type="active site" evidence="1">
    <location>
        <position position="76"/>
    </location>
</feature>
<feature type="active site" evidence="1">
    <location>
        <position position="81"/>
    </location>
</feature>
<feature type="modified residue" description="O-di-AMP-tyrosine" evidence="1">
    <location>
        <position position="83"/>
    </location>
</feature>
<accession>Q58613</accession>
<gene>
    <name type="ordered locus">MJ1216</name>
</gene>
<reference key="1">
    <citation type="journal article" date="1996" name="Science">
        <title>Complete genome sequence of the methanogenic archaeon, Methanococcus jannaschii.</title>
        <authorList>
            <person name="Bult C.J."/>
            <person name="White O."/>
            <person name="Olsen G.J."/>
            <person name="Zhou L."/>
            <person name="Fleischmann R.D."/>
            <person name="Sutton G.G."/>
            <person name="Blake J.A."/>
            <person name="FitzGerald L.M."/>
            <person name="Clayton R.A."/>
            <person name="Gocayne J.D."/>
            <person name="Kerlavage A.R."/>
            <person name="Dougherty B.A."/>
            <person name="Tomb J.-F."/>
            <person name="Adams M.D."/>
            <person name="Reich C.I."/>
            <person name="Overbeek R."/>
            <person name="Kirkness E.F."/>
            <person name="Weinstock K.G."/>
            <person name="Merrick J.M."/>
            <person name="Glodek A."/>
            <person name="Scott J.L."/>
            <person name="Geoghagen N.S.M."/>
            <person name="Weidman J.F."/>
            <person name="Fuhrmann J.L."/>
            <person name="Nguyen D."/>
            <person name="Utterback T.R."/>
            <person name="Kelley J.M."/>
            <person name="Peterson J.D."/>
            <person name="Sadow P.W."/>
            <person name="Hanna M.C."/>
            <person name="Cotton M.D."/>
            <person name="Roberts K.M."/>
            <person name="Hurst M.A."/>
            <person name="Kaine B.P."/>
            <person name="Borodovsky M."/>
            <person name="Klenk H.-P."/>
            <person name="Fraser C.M."/>
            <person name="Smith H.O."/>
            <person name="Woese C.R."/>
            <person name="Venter J.C."/>
        </authorList>
    </citation>
    <scope>NUCLEOTIDE SEQUENCE [LARGE SCALE GENOMIC DNA]</scope>
    <source>
        <strain>ATCC 43067 / DSM 2661 / JAL-1 / JCM 10045 / NBRC 100440</strain>
    </source>
</reference>
<evidence type="ECO:0000250" key="1">
    <source>
        <dbReference type="UniProtKB" id="A0A0B0QJR1"/>
    </source>
</evidence>
<evidence type="ECO:0000250" key="2">
    <source>
        <dbReference type="UniProtKB" id="Q8ECH6"/>
    </source>
</evidence>
<evidence type="ECO:0000305" key="3"/>